<name>DLTC_STAEQ</name>
<comment type="function">
    <text evidence="1">Carrier protein involved in the D-alanylation of lipoteichoic acid (LTA). The loading of thioester-linked D-alanine onto DltC is catalyzed by D-alanine--D-alanyl carrier protein ligase DltA. The DltC-carried D-alanyl group is further transferred to cell membrane phosphatidylglycerol (PG) by forming an ester bond, probably catalyzed by DltD. D-alanylation of LTA plays an important role in modulating the properties of the cell wall in Gram-positive bacteria, influencing the net charge of the cell wall.</text>
</comment>
<comment type="pathway">
    <text evidence="1">Cell wall biogenesis; lipoteichoic acid biosynthesis.</text>
</comment>
<comment type="subcellular location">
    <subcellularLocation>
        <location evidence="1">Cytoplasm</location>
    </subcellularLocation>
</comment>
<comment type="PTM">
    <text evidence="1">4'-phosphopantetheine is transferred from CoA to a specific serine of apo-DCP.</text>
</comment>
<comment type="similarity">
    <text evidence="1">Belongs to the DltC family.</text>
</comment>
<sequence>MEFREQVLDLLAEVAENNIVKENPDVEIFEEGIIDSFQTVGLLLEIQNKLDIEVSIMDFDRDEWATPNKIVEALEELR</sequence>
<proteinExistence type="inferred from homology"/>
<feature type="chain" id="PRO_0000213105" description="D-alanyl carrier protein">
    <location>
        <begin position="1"/>
        <end position="78"/>
    </location>
</feature>
<feature type="domain" description="Carrier" evidence="1">
    <location>
        <begin position="1"/>
        <end position="78"/>
    </location>
</feature>
<feature type="modified residue" description="O-(pantetheine 4'-phosphoryl)serine" evidence="1">
    <location>
        <position position="36"/>
    </location>
</feature>
<protein>
    <recommendedName>
        <fullName evidence="1">D-alanyl carrier protein</fullName>
        <shortName evidence="1">DCP</shortName>
    </recommendedName>
    <alternativeName>
        <fullName evidence="1">D-alanine--poly(phosphoribitol) ligase subunit 2</fullName>
    </alternativeName>
</protein>
<organism>
    <name type="scientific">Staphylococcus epidermidis (strain ATCC 35984 / DSM 28319 / BCRC 17069 / CCUG 31568 / BM 3577 / RP62A)</name>
    <dbReference type="NCBI Taxonomy" id="176279"/>
    <lineage>
        <taxon>Bacteria</taxon>
        <taxon>Bacillati</taxon>
        <taxon>Bacillota</taxon>
        <taxon>Bacilli</taxon>
        <taxon>Bacillales</taxon>
        <taxon>Staphylococcaceae</taxon>
        <taxon>Staphylococcus</taxon>
    </lineage>
</organism>
<gene>
    <name evidence="1" type="primary">dltC</name>
    <name type="ordered locus">SERP0520</name>
</gene>
<accession>Q5HQM8</accession>
<keyword id="KW-0961">Cell wall biogenesis/degradation</keyword>
<keyword id="KW-0963">Cytoplasm</keyword>
<keyword id="KW-0596">Phosphopantetheine</keyword>
<keyword id="KW-0597">Phosphoprotein</keyword>
<keyword id="KW-1185">Reference proteome</keyword>
<evidence type="ECO:0000255" key="1">
    <source>
        <dbReference type="HAMAP-Rule" id="MF_00565"/>
    </source>
</evidence>
<reference key="1">
    <citation type="journal article" date="2005" name="J. Bacteriol.">
        <title>Insights on evolution of virulence and resistance from the complete genome analysis of an early methicillin-resistant Staphylococcus aureus strain and a biofilm-producing methicillin-resistant Staphylococcus epidermidis strain.</title>
        <authorList>
            <person name="Gill S.R."/>
            <person name="Fouts D.E."/>
            <person name="Archer G.L."/>
            <person name="Mongodin E.F."/>
            <person name="DeBoy R.T."/>
            <person name="Ravel J."/>
            <person name="Paulsen I.T."/>
            <person name="Kolonay J.F."/>
            <person name="Brinkac L.M."/>
            <person name="Beanan M.J."/>
            <person name="Dodson R.J."/>
            <person name="Daugherty S.C."/>
            <person name="Madupu R."/>
            <person name="Angiuoli S.V."/>
            <person name="Durkin A.S."/>
            <person name="Haft D.H."/>
            <person name="Vamathevan J.J."/>
            <person name="Khouri H."/>
            <person name="Utterback T.R."/>
            <person name="Lee C."/>
            <person name="Dimitrov G."/>
            <person name="Jiang L."/>
            <person name="Qin H."/>
            <person name="Weidman J."/>
            <person name="Tran K."/>
            <person name="Kang K.H."/>
            <person name="Hance I.R."/>
            <person name="Nelson K.E."/>
            <person name="Fraser C.M."/>
        </authorList>
    </citation>
    <scope>NUCLEOTIDE SEQUENCE [LARGE SCALE GENOMIC DNA]</scope>
    <source>
        <strain>ATCC 35984 / DSM 28319 / BCRC 17069 / CCUG 31568 / BM 3577 / RP62A</strain>
    </source>
</reference>
<dbReference type="EMBL" id="CP000029">
    <property type="protein sequence ID" value="AAW53909.1"/>
    <property type="molecule type" value="Genomic_DNA"/>
</dbReference>
<dbReference type="RefSeq" id="WP_001831996.1">
    <property type="nucleotide sequence ID" value="NC_002976.3"/>
</dbReference>
<dbReference type="SMR" id="Q5HQM8"/>
<dbReference type="STRING" id="176279.SERP0520"/>
<dbReference type="GeneID" id="50019226"/>
<dbReference type="KEGG" id="ser:SERP0520"/>
<dbReference type="eggNOG" id="COG0236">
    <property type="taxonomic scope" value="Bacteria"/>
</dbReference>
<dbReference type="HOGENOM" id="CLU_108696_19_0_9"/>
<dbReference type="UniPathway" id="UPA00556"/>
<dbReference type="Proteomes" id="UP000000531">
    <property type="component" value="Chromosome"/>
</dbReference>
<dbReference type="GO" id="GO:0005737">
    <property type="term" value="C:cytoplasm"/>
    <property type="evidence" value="ECO:0007669"/>
    <property type="project" value="UniProtKB-SubCell"/>
</dbReference>
<dbReference type="GO" id="GO:0036370">
    <property type="term" value="F:D-alanyl carrier activity"/>
    <property type="evidence" value="ECO:0007669"/>
    <property type="project" value="UniProtKB-UniRule"/>
</dbReference>
<dbReference type="GO" id="GO:0071555">
    <property type="term" value="P:cell wall organization"/>
    <property type="evidence" value="ECO:0007669"/>
    <property type="project" value="UniProtKB-KW"/>
</dbReference>
<dbReference type="GO" id="GO:0070395">
    <property type="term" value="P:lipoteichoic acid biosynthetic process"/>
    <property type="evidence" value="ECO:0007669"/>
    <property type="project" value="UniProtKB-UniRule"/>
</dbReference>
<dbReference type="Gene3D" id="1.10.1200.10">
    <property type="entry name" value="ACP-like"/>
    <property type="match status" value="1"/>
</dbReference>
<dbReference type="HAMAP" id="MF_00565">
    <property type="entry name" value="DltC"/>
    <property type="match status" value="1"/>
</dbReference>
<dbReference type="InterPro" id="IPR036736">
    <property type="entry name" value="ACP-like_sf"/>
</dbReference>
<dbReference type="InterPro" id="IPR003230">
    <property type="entry name" value="DltC"/>
</dbReference>
<dbReference type="InterPro" id="IPR009081">
    <property type="entry name" value="PP-bd_ACP"/>
</dbReference>
<dbReference type="NCBIfam" id="TIGR01688">
    <property type="entry name" value="dltC"/>
    <property type="match status" value="1"/>
</dbReference>
<dbReference type="NCBIfam" id="NF003464">
    <property type="entry name" value="PRK05087.1"/>
    <property type="match status" value="1"/>
</dbReference>
<dbReference type="Pfam" id="PF00550">
    <property type="entry name" value="PP-binding"/>
    <property type="match status" value="1"/>
</dbReference>
<dbReference type="SUPFAM" id="SSF47336">
    <property type="entry name" value="ACP-like"/>
    <property type="match status" value="1"/>
</dbReference>
<dbReference type="PROSITE" id="PS50075">
    <property type="entry name" value="CARRIER"/>
    <property type="match status" value="1"/>
</dbReference>